<reference key="1">
    <citation type="journal article" date="2005" name="Science">
        <title>The transcriptional landscape of the mammalian genome.</title>
        <authorList>
            <person name="Carninci P."/>
            <person name="Kasukawa T."/>
            <person name="Katayama S."/>
            <person name="Gough J."/>
            <person name="Frith M.C."/>
            <person name="Maeda N."/>
            <person name="Oyama R."/>
            <person name="Ravasi T."/>
            <person name="Lenhard B."/>
            <person name="Wells C."/>
            <person name="Kodzius R."/>
            <person name="Shimokawa K."/>
            <person name="Bajic V.B."/>
            <person name="Brenner S.E."/>
            <person name="Batalov S."/>
            <person name="Forrest A.R."/>
            <person name="Zavolan M."/>
            <person name="Davis M.J."/>
            <person name="Wilming L.G."/>
            <person name="Aidinis V."/>
            <person name="Allen J.E."/>
            <person name="Ambesi-Impiombato A."/>
            <person name="Apweiler R."/>
            <person name="Aturaliya R.N."/>
            <person name="Bailey T.L."/>
            <person name="Bansal M."/>
            <person name="Baxter L."/>
            <person name="Beisel K.W."/>
            <person name="Bersano T."/>
            <person name="Bono H."/>
            <person name="Chalk A.M."/>
            <person name="Chiu K.P."/>
            <person name="Choudhary V."/>
            <person name="Christoffels A."/>
            <person name="Clutterbuck D.R."/>
            <person name="Crowe M.L."/>
            <person name="Dalla E."/>
            <person name="Dalrymple B.P."/>
            <person name="de Bono B."/>
            <person name="Della Gatta G."/>
            <person name="di Bernardo D."/>
            <person name="Down T."/>
            <person name="Engstrom P."/>
            <person name="Fagiolini M."/>
            <person name="Faulkner G."/>
            <person name="Fletcher C.F."/>
            <person name="Fukushima T."/>
            <person name="Furuno M."/>
            <person name="Futaki S."/>
            <person name="Gariboldi M."/>
            <person name="Georgii-Hemming P."/>
            <person name="Gingeras T.R."/>
            <person name="Gojobori T."/>
            <person name="Green R.E."/>
            <person name="Gustincich S."/>
            <person name="Harbers M."/>
            <person name="Hayashi Y."/>
            <person name="Hensch T.K."/>
            <person name="Hirokawa N."/>
            <person name="Hill D."/>
            <person name="Huminiecki L."/>
            <person name="Iacono M."/>
            <person name="Ikeo K."/>
            <person name="Iwama A."/>
            <person name="Ishikawa T."/>
            <person name="Jakt M."/>
            <person name="Kanapin A."/>
            <person name="Katoh M."/>
            <person name="Kawasawa Y."/>
            <person name="Kelso J."/>
            <person name="Kitamura H."/>
            <person name="Kitano H."/>
            <person name="Kollias G."/>
            <person name="Krishnan S.P."/>
            <person name="Kruger A."/>
            <person name="Kummerfeld S.K."/>
            <person name="Kurochkin I.V."/>
            <person name="Lareau L.F."/>
            <person name="Lazarevic D."/>
            <person name="Lipovich L."/>
            <person name="Liu J."/>
            <person name="Liuni S."/>
            <person name="McWilliam S."/>
            <person name="Madan Babu M."/>
            <person name="Madera M."/>
            <person name="Marchionni L."/>
            <person name="Matsuda H."/>
            <person name="Matsuzawa S."/>
            <person name="Miki H."/>
            <person name="Mignone F."/>
            <person name="Miyake S."/>
            <person name="Morris K."/>
            <person name="Mottagui-Tabar S."/>
            <person name="Mulder N."/>
            <person name="Nakano N."/>
            <person name="Nakauchi H."/>
            <person name="Ng P."/>
            <person name="Nilsson R."/>
            <person name="Nishiguchi S."/>
            <person name="Nishikawa S."/>
            <person name="Nori F."/>
            <person name="Ohara O."/>
            <person name="Okazaki Y."/>
            <person name="Orlando V."/>
            <person name="Pang K.C."/>
            <person name="Pavan W.J."/>
            <person name="Pavesi G."/>
            <person name="Pesole G."/>
            <person name="Petrovsky N."/>
            <person name="Piazza S."/>
            <person name="Reed J."/>
            <person name="Reid J.F."/>
            <person name="Ring B.Z."/>
            <person name="Ringwald M."/>
            <person name="Rost B."/>
            <person name="Ruan Y."/>
            <person name="Salzberg S.L."/>
            <person name="Sandelin A."/>
            <person name="Schneider C."/>
            <person name="Schoenbach C."/>
            <person name="Sekiguchi K."/>
            <person name="Semple C.A."/>
            <person name="Seno S."/>
            <person name="Sessa L."/>
            <person name="Sheng Y."/>
            <person name="Shibata Y."/>
            <person name="Shimada H."/>
            <person name="Shimada K."/>
            <person name="Silva D."/>
            <person name="Sinclair B."/>
            <person name="Sperling S."/>
            <person name="Stupka E."/>
            <person name="Sugiura K."/>
            <person name="Sultana R."/>
            <person name="Takenaka Y."/>
            <person name="Taki K."/>
            <person name="Tammoja K."/>
            <person name="Tan S.L."/>
            <person name="Tang S."/>
            <person name="Taylor M.S."/>
            <person name="Tegner J."/>
            <person name="Teichmann S.A."/>
            <person name="Ueda H.R."/>
            <person name="van Nimwegen E."/>
            <person name="Verardo R."/>
            <person name="Wei C.L."/>
            <person name="Yagi K."/>
            <person name="Yamanishi H."/>
            <person name="Zabarovsky E."/>
            <person name="Zhu S."/>
            <person name="Zimmer A."/>
            <person name="Hide W."/>
            <person name="Bult C."/>
            <person name="Grimmond S.M."/>
            <person name="Teasdale R.D."/>
            <person name="Liu E.T."/>
            <person name="Brusic V."/>
            <person name="Quackenbush J."/>
            <person name="Wahlestedt C."/>
            <person name="Mattick J.S."/>
            <person name="Hume D.A."/>
            <person name="Kai C."/>
            <person name="Sasaki D."/>
            <person name="Tomaru Y."/>
            <person name="Fukuda S."/>
            <person name="Kanamori-Katayama M."/>
            <person name="Suzuki M."/>
            <person name="Aoki J."/>
            <person name="Arakawa T."/>
            <person name="Iida J."/>
            <person name="Imamura K."/>
            <person name="Itoh M."/>
            <person name="Kato T."/>
            <person name="Kawaji H."/>
            <person name="Kawagashira N."/>
            <person name="Kawashima T."/>
            <person name="Kojima M."/>
            <person name="Kondo S."/>
            <person name="Konno H."/>
            <person name="Nakano K."/>
            <person name="Ninomiya N."/>
            <person name="Nishio T."/>
            <person name="Okada M."/>
            <person name="Plessy C."/>
            <person name="Shibata K."/>
            <person name="Shiraki T."/>
            <person name="Suzuki S."/>
            <person name="Tagami M."/>
            <person name="Waki K."/>
            <person name="Watahiki A."/>
            <person name="Okamura-Oho Y."/>
            <person name="Suzuki H."/>
            <person name="Kawai J."/>
            <person name="Hayashizaki Y."/>
        </authorList>
    </citation>
    <scope>NUCLEOTIDE SEQUENCE [LARGE SCALE MRNA]</scope>
    <source>
        <strain>C57BL/6J</strain>
        <tissue>Bone marrow</tissue>
    </source>
</reference>
<reference key="2">
    <citation type="journal article" date="2004" name="Genome Res.">
        <title>The status, quality, and expansion of the NIH full-length cDNA project: the Mammalian Gene Collection (MGC).</title>
        <authorList>
            <consortium name="The MGC Project Team"/>
        </authorList>
    </citation>
    <scope>NUCLEOTIDE SEQUENCE [LARGE SCALE MRNA]</scope>
    <source>
        <strain>Czech II</strain>
        <tissue>Mammary tumor</tissue>
    </source>
</reference>
<evidence type="ECO:0000250" key="1"/>
<evidence type="ECO:0000305" key="2"/>
<organism>
    <name type="scientific">Mus musculus</name>
    <name type="common">Mouse</name>
    <dbReference type="NCBI Taxonomy" id="10090"/>
    <lineage>
        <taxon>Eukaryota</taxon>
        <taxon>Metazoa</taxon>
        <taxon>Chordata</taxon>
        <taxon>Craniata</taxon>
        <taxon>Vertebrata</taxon>
        <taxon>Euteleostomi</taxon>
        <taxon>Mammalia</taxon>
        <taxon>Eutheria</taxon>
        <taxon>Euarchontoglires</taxon>
        <taxon>Glires</taxon>
        <taxon>Rodentia</taxon>
        <taxon>Myomorpha</taxon>
        <taxon>Muroidea</taxon>
        <taxon>Muridae</taxon>
        <taxon>Murinae</taxon>
        <taxon>Mus</taxon>
        <taxon>Mus</taxon>
    </lineage>
</organism>
<sequence>MATFVSELEAAKKNLSEALGDNVKQYWANLKLWFKQKISKEEFDLEAHRLLTQDNVHSHNDFLLAILTRCQILVSTPEGAGSLPWTGGSAAKPGKPKGKKKLSSVRQKFDHRFQPQNPLSGAQQFVAKEPQGDDDLKLCSHTMMLPTRGQLEGRMIVTAYEHGLDNVTEEAVSAVVYAVENHLKDILTSVVSRRKAYRVRDGHFKYAFGSNVTPQPYLKNSVVAYNNLVEGPPAFSAPCANQSPASQPHPDDAEQQAAFLLACSGDTLPASLPPVNMYDLFEALQVHREVIPTHTVYALNIERIIMKLWHPNHEELQQDKVHRQRLAAKEGLLLC</sequence>
<keyword id="KW-0539">Nucleus</keyword>
<keyword id="KW-1185">Reference proteome</keyword>
<keyword id="KW-0804">Transcription</keyword>
<keyword id="KW-0805">Transcription regulation</keyword>
<comment type="function">
    <text>Probably involved in transcriptional regulation.</text>
</comment>
<comment type="subunit">
    <text evidence="1">Component of the STAGA transcription coactivator-HAT complex, at least composed of SUPT3H, GCN5L2, TAF5L, TAF6L, SUPT7L, TADA3L, TAD1L, TAF10, TAF12, TRRAP and TAF9.</text>
</comment>
<comment type="subcellular location">
    <subcellularLocation>
        <location evidence="1">Nucleus</location>
    </subcellularLocation>
</comment>
<comment type="similarity">
    <text evidence="2">Belongs to the TADA1 family.</text>
</comment>
<feature type="chain" id="PRO_0000316016" description="Transcriptional adapter 1">
    <location>
        <begin position="1"/>
        <end position="335"/>
    </location>
</feature>
<protein>
    <recommendedName>
        <fullName>Transcriptional adapter 1</fullName>
    </recommendedName>
    <alternativeName>
        <fullName>Transcriptional adapter 1-like protein</fullName>
    </alternativeName>
</protein>
<gene>
    <name type="primary">Tada1</name>
    <name type="synonym">Tada1l</name>
</gene>
<accession>Q99LM9</accession>
<proteinExistence type="evidence at transcript level"/>
<name>TADA1_MOUSE</name>
<dbReference type="EMBL" id="AK151132">
    <property type="protein sequence ID" value="BAE30140.1"/>
    <property type="molecule type" value="mRNA"/>
</dbReference>
<dbReference type="EMBL" id="BC002307">
    <property type="protein sequence ID" value="AAH02307.1"/>
    <property type="molecule type" value="mRNA"/>
</dbReference>
<dbReference type="EMBL" id="BC027337">
    <property type="protein sequence ID" value="AAH27337.1"/>
    <property type="molecule type" value="mRNA"/>
</dbReference>
<dbReference type="CCDS" id="CCDS15450.1"/>
<dbReference type="RefSeq" id="NP_084521.1">
    <property type="nucleotide sequence ID" value="NM_030245.3"/>
</dbReference>
<dbReference type="SMR" id="Q99LM9"/>
<dbReference type="BioGRID" id="205618">
    <property type="interactions" value="1"/>
</dbReference>
<dbReference type="ComplexPortal" id="CPX-6803">
    <property type="entry name" value="SAGA complex, KAT2B variant"/>
</dbReference>
<dbReference type="ComplexPortal" id="CPX-920">
    <property type="entry name" value="SAGA complex, KAT2A variant"/>
</dbReference>
<dbReference type="FunCoup" id="Q99LM9">
    <property type="interactions" value="3252"/>
</dbReference>
<dbReference type="IntAct" id="Q99LM9">
    <property type="interactions" value="2"/>
</dbReference>
<dbReference type="MINT" id="Q99LM9"/>
<dbReference type="STRING" id="10090.ENSMUSP00000027846"/>
<dbReference type="GlyGen" id="Q99LM9">
    <property type="glycosylation" value="1 site, 1 O-linked glycan (1 site)"/>
</dbReference>
<dbReference type="iPTMnet" id="Q99LM9"/>
<dbReference type="PhosphoSitePlus" id="Q99LM9"/>
<dbReference type="PaxDb" id="10090-ENSMUSP00000027846"/>
<dbReference type="PeptideAtlas" id="Q99LM9"/>
<dbReference type="ProteomicsDB" id="263241"/>
<dbReference type="Pumba" id="Q99LM9"/>
<dbReference type="Antibodypedia" id="34337">
    <property type="antibodies" value="34 antibodies from 15 providers"/>
</dbReference>
<dbReference type="DNASU" id="27878"/>
<dbReference type="Ensembl" id="ENSMUST00000027846.8">
    <property type="protein sequence ID" value="ENSMUSP00000027846.8"/>
    <property type="gene ID" value="ENSMUSG00000026563.14"/>
</dbReference>
<dbReference type="GeneID" id="27878"/>
<dbReference type="KEGG" id="mmu:27878"/>
<dbReference type="UCSC" id="uc007dkm.2">
    <property type="organism name" value="mouse"/>
</dbReference>
<dbReference type="AGR" id="MGI:1196415"/>
<dbReference type="CTD" id="117143"/>
<dbReference type="MGI" id="MGI:1196415">
    <property type="gene designation" value="Tada1"/>
</dbReference>
<dbReference type="VEuPathDB" id="HostDB:ENSMUSG00000026563"/>
<dbReference type="eggNOG" id="ENOG502QRMT">
    <property type="taxonomic scope" value="Eukaryota"/>
</dbReference>
<dbReference type="GeneTree" id="ENSGT00390000011644"/>
<dbReference type="HOGENOM" id="CLU_071612_0_0_1"/>
<dbReference type="InParanoid" id="Q99LM9"/>
<dbReference type="OMA" id="NIMTEDQ"/>
<dbReference type="OrthoDB" id="10264870at2759"/>
<dbReference type="PhylomeDB" id="Q99LM9"/>
<dbReference type="TreeFam" id="TF324330"/>
<dbReference type="BioGRID-ORCS" id="27878">
    <property type="hits" value="18 hits in 83 CRISPR screens"/>
</dbReference>
<dbReference type="ChiTaRS" id="Tada1">
    <property type="organism name" value="mouse"/>
</dbReference>
<dbReference type="PRO" id="PR:Q99LM9"/>
<dbReference type="Proteomes" id="UP000000589">
    <property type="component" value="Chromosome 1"/>
</dbReference>
<dbReference type="RNAct" id="Q99LM9">
    <property type="molecule type" value="protein"/>
</dbReference>
<dbReference type="Bgee" id="ENSMUSG00000026563">
    <property type="expression patterns" value="Expressed in animal zygote and 267 other cell types or tissues"/>
</dbReference>
<dbReference type="ExpressionAtlas" id="Q99LM9">
    <property type="expression patterns" value="baseline and differential"/>
</dbReference>
<dbReference type="GO" id="GO:0005829">
    <property type="term" value="C:cytosol"/>
    <property type="evidence" value="ECO:0007669"/>
    <property type="project" value="Ensembl"/>
</dbReference>
<dbReference type="GO" id="GO:0005925">
    <property type="term" value="C:focal adhesion"/>
    <property type="evidence" value="ECO:0007669"/>
    <property type="project" value="Ensembl"/>
</dbReference>
<dbReference type="GO" id="GO:0005654">
    <property type="term" value="C:nucleoplasm"/>
    <property type="evidence" value="ECO:0007669"/>
    <property type="project" value="Ensembl"/>
</dbReference>
<dbReference type="GO" id="GO:0000124">
    <property type="term" value="C:SAGA complex"/>
    <property type="evidence" value="ECO:0000303"/>
    <property type="project" value="ComplexPortal"/>
</dbReference>
<dbReference type="GO" id="GO:0003713">
    <property type="term" value="F:transcription coactivator activity"/>
    <property type="evidence" value="ECO:0007669"/>
    <property type="project" value="Ensembl"/>
</dbReference>
<dbReference type="GO" id="GO:0045893">
    <property type="term" value="P:positive regulation of DNA-templated transcription"/>
    <property type="evidence" value="ECO:0000303"/>
    <property type="project" value="ComplexPortal"/>
</dbReference>
<dbReference type="GO" id="GO:0006282">
    <property type="term" value="P:regulation of DNA repair"/>
    <property type="evidence" value="ECO:0000303"/>
    <property type="project" value="ComplexPortal"/>
</dbReference>
<dbReference type="GO" id="GO:0043484">
    <property type="term" value="P:regulation of RNA splicing"/>
    <property type="evidence" value="ECO:0000303"/>
    <property type="project" value="ComplexPortal"/>
</dbReference>
<dbReference type="CDD" id="cd22934">
    <property type="entry name" value="HFD_TADA1"/>
    <property type="match status" value="1"/>
</dbReference>
<dbReference type="InterPro" id="IPR024738">
    <property type="entry name" value="Hfi1/Tada1"/>
</dbReference>
<dbReference type="PANTHER" id="PTHR21277">
    <property type="entry name" value="TRANSCRIPTIONAL ADAPTER 1"/>
    <property type="match status" value="1"/>
</dbReference>
<dbReference type="PANTHER" id="PTHR21277:SF5">
    <property type="entry name" value="TRANSCRIPTIONAL ADAPTER 1"/>
    <property type="match status" value="1"/>
</dbReference>
<dbReference type="Pfam" id="PF12767">
    <property type="entry name" value="SAGA-Tad1"/>
    <property type="match status" value="2"/>
</dbReference>